<geneLocation type="plasmid">
    <name>OCT</name>
</geneLocation>
<evidence type="ECO:0000250" key="1"/>
<evidence type="ECO:0000255" key="2">
    <source>
        <dbReference type="PROSITE-ProRule" id="PRU00241"/>
    </source>
</evidence>
<evidence type="ECO:0000269" key="3">
    <source>
    </source>
</evidence>
<evidence type="ECO:0000269" key="4">
    <source>
    </source>
</evidence>
<evidence type="ECO:0000269" key="5">
    <source>
    </source>
</evidence>
<evidence type="ECO:0000269" key="6">
    <source>
    </source>
</evidence>
<evidence type="ECO:0000269" key="7">
    <source>
    </source>
</evidence>
<evidence type="ECO:0000269" key="8">
    <source>
    </source>
</evidence>
<evidence type="ECO:0000305" key="9"/>
<evidence type="ECO:0007829" key="10">
    <source>
        <dbReference type="PDB" id="1S24"/>
    </source>
</evidence>
<organism>
    <name type="scientific">Ectopseudomonas oleovorans</name>
    <name type="common">Pseudomonas oleovorans</name>
    <dbReference type="NCBI Taxonomy" id="301"/>
    <lineage>
        <taxon>Bacteria</taxon>
        <taxon>Pseudomonadati</taxon>
        <taxon>Pseudomonadota</taxon>
        <taxon>Gammaproteobacteria</taxon>
        <taxon>Pseudomonadales</taxon>
        <taxon>Pseudomonadaceae</taxon>
        <taxon>Ectopseudomonas</taxon>
    </lineage>
</organism>
<comment type="function">
    <text evidence="4 7">Involved in the hydrocarbon hydroxylating system, which transfers electrons from NADH to rubredoxin reductase and then through rubredoxin to alkane 1 monooxygenase.</text>
</comment>
<comment type="cofactor">
    <cofactor evidence="7">
        <name>Fe(3+)</name>
        <dbReference type="ChEBI" id="CHEBI:29034"/>
    </cofactor>
    <text evidence="7">Binds 2 Fe(3+) ions per subunit.</text>
</comment>
<comment type="pathway">
    <text>Hydrocarbon metabolism; alkane degradation.</text>
</comment>
<comment type="subcellular location">
    <subcellularLocation>
        <location evidence="1">Cytoplasm</location>
    </subcellularLocation>
</comment>
<comment type="induction">
    <text evidence="3 5">Induced by AlkS and n-alkanes.</text>
</comment>
<comment type="miscellaneous">
    <text>Unlike other rubredoxins, this rubredoxin is unique in that it contains two binding sites for iron. It is most probably the product of a gene duplication event. The 2Fe form of the rubredoxin is a physiological form but it is less stable than the readily isolated 1Fe form. Both domains can form productive electron transfer complexes with rubredoxin reductase and accept electrons from the enzyme bound FAD.</text>
</comment>
<comment type="similarity">
    <text evidence="9">Belongs to the rubredoxin family.</text>
</comment>
<keyword id="KW-0002">3D-structure</keyword>
<keyword id="KW-0963">Cytoplasm</keyword>
<keyword id="KW-0903">Direct protein sequencing</keyword>
<keyword id="KW-0249">Electron transport</keyword>
<keyword id="KW-0408">Iron</keyword>
<keyword id="KW-0479">Metal-binding</keyword>
<keyword id="KW-0614">Plasmid</keyword>
<keyword id="KW-0677">Repeat</keyword>
<keyword id="KW-0813">Transport</keyword>
<gene>
    <name type="primary">alkG</name>
</gene>
<name>RUBR2_ECTOL</name>
<protein>
    <recommendedName>
        <fullName>Rubredoxin-2</fullName>
        <shortName>Rdxs</shortName>
    </recommendedName>
    <alternativeName>
        <fullName>Two-iron rubredoxin</fullName>
    </alternativeName>
</protein>
<reference key="1">
    <citation type="journal article" date="1989" name="J. Biol. Chem.">
        <title>The Pseudomonas oleovorans alkBAC operon encodes two structurally related rubredoxins and an aldehyde dehydrogenase.</title>
        <authorList>
            <person name="Kok M."/>
            <person name="Oldenhuis R."/>
            <person name="van der Linden M.P.G."/>
            <person name="Meulenberg C.H.C."/>
            <person name="Kingma J."/>
            <person name="Witholt B."/>
        </authorList>
    </citation>
    <scope>NUCLEOTIDE SEQUENCE [GENOMIC DNA]</scope>
    <source>
        <strain>GPo1</strain>
    </source>
</reference>
<reference key="2">
    <citation type="journal article" date="1971" name="Biochem. Biophys. Res. Commun.">
        <title>Evolutionary and phylogenetic relationships of rubredoxin-containing microbes.</title>
        <authorList>
            <person name="Benson A.M."/>
            <person name="Tomoda K."/>
            <person name="Chang J."/>
            <person name="Matsueda G."/>
            <person name="Lode E.T."/>
            <person name="Coon M.J."/>
            <person name="Yasunobu K.T."/>
        </authorList>
    </citation>
    <scope>PROTEIN SEQUENCE OF 2-173</scope>
</reference>
<reference key="3">
    <citation type="journal article" date="1968" name="J. Biol. Chem.">
        <title>Enzymatic omega-oxidation. 3. Purification and properties of rubredoxin, a component of the omega-hydroxylation system of Pseudomonas oleovorans.</title>
        <authorList>
            <person name="Peterson J.A."/>
            <person name="Coon M.J."/>
        </authorList>
    </citation>
    <scope>FUNCTION</scope>
    <scope>COFACTOR</scope>
</reference>
<reference key="4">
    <citation type="journal article" date="1998" name="Biochemistry">
        <title>Electron transfer from flavin to iron in the Pseudomonas oleovorans rubredoxin reductase-rubredoxin electron transfer complex.</title>
        <authorList>
            <person name="Lee H.J."/>
            <person name="Basran J."/>
            <person name="Scrutton N.S."/>
        </authorList>
    </citation>
    <scope>ELECTRON TRANSFER</scope>
</reference>
<reference key="5">
    <citation type="journal article" date="2000" name="Mol. Microbiol.">
        <title>A positive feedback mechanism controls expression of AlkS, the transcriptional regulator of the Pseudomonas oleovorans alkane degradation pathway.</title>
        <authorList>
            <person name="Canosa I."/>
            <person name="Sanchez-Romero J.M."/>
            <person name="Yuste L."/>
            <person name="Rojo F."/>
        </authorList>
    </citation>
    <scope>INDUCTION</scope>
</reference>
<reference key="6">
    <citation type="journal article" date="2001" name="Biochem. J.">
        <title>Two-iron rubredoxin of Pseudomonas oleovorans: production, stability and characterization of the individual iron-binding domains by optical, CD and NMR spectroscopies.</title>
        <authorList>
            <person name="Perry A."/>
            <person name="Lian L.-Y."/>
            <person name="Scrutton N.S."/>
        </authorList>
    </citation>
    <scope>FUNCTION</scope>
</reference>
<reference key="7">
    <citation type="journal article" date="2003" name="J. Bacteriol.">
        <title>Differential expression of the components of the two alkane hydroxylases from Pseudomonas aeruginosa.</title>
        <authorList>
            <person name="Marin M.M."/>
            <person name="Yuste L."/>
            <person name="Rojo F."/>
        </authorList>
    </citation>
    <scope>INDUCTION</scope>
</reference>
<reference key="8">
    <citation type="journal article" date="2004" name="Biochemistry">
        <title>Solution structure of the two-iron rubredoxin of Pseudomonas oleovorans determined by NMR spectroscopy and solution X-ray scattering and interactions with rubredoxin reductase.</title>
        <authorList>
            <person name="Perry A."/>
            <person name="Tambyrajah W."/>
            <person name="Grossmann J.G."/>
            <person name="Lian L.Y."/>
            <person name="Scrutton N.S."/>
        </authorList>
    </citation>
    <scope>STRUCTURE BY NMR OF 87-172 IN COMPLEX WITH IRON</scope>
</reference>
<proteinExistence type="evidence at protein level"/>
<dbReference type="EMBL" id="AJ245436">
    <property type="protein sequence ID" value="CAB54052.1"/>
    <property type="molecule type" value="Genomic_DNA"/>
</dbReference>
<dbReference type="PIR" id="B32850">
    <property type="entry name" value="RUPSEO"/>
</dbReference>
<dbReference type="PDB" id="1S24">
    <property type="method" value="NMR"/>
    <property type="chains" value="A=87-173"/>
</dbReference>
<dbReference type="PDBsum" id="1S24"/>
<dbReference type="SMR" id="P00272"/>
<dbReference type="BioCyc" id="MetaCyc:MONOMER-3844"/>
<dbReference type="UniPathway" id="UPA00191"/>
<dbReference type="EvolutionaryTrace" id="P00272"/>
<dbReference type="GO" id="GO:0005737">
    <property type="term" value="C:cytoplasm"/>
    <property type="evidence" value="ECO:0007669"/>
    <property type="project" value="UniProtKB-SubCell"/>
</dbReference>
<dbReference type="GO" id="GO:0009055">
    <property type="term" value="F:electron transfer activity"/>
    <property type="evidence" value="ECO:0007669"/>
    <property type="project" value="TreeGrafter"/>
</dbReference>
<dbReference type="GO" id="GO:0005506">
    <property type="term" value="F:iron ion binding"/>
    <property type="evidence" value="ECO:0007669"/>
    <property type="project" value="InterPro"/>
</dbReference>
<dbReference type="GO" id="GO:0043448">
    <property type="term" value="P:alkane catabolic process"/>
    <property type="evidence" value="ECO:0007669"/>
    <property type="project" value="UniProtKB-UniPathway"/>
</dbReference>
<dbReference type="CDD" id="cd00730">
    <property type="entry name" value="rubredoxin"/>
    <property type="match status" value="2"/>
</dbReference>
<dbReference type="FunFam" id="2.20.28.10:FF:000001">
    <property type="entry name" value="Rubredoxin"/>
    <property type="match status" value="1"/>
</dbReference>
<dbReference type="Gene3D" id="2.20.28.10">
    <property type="match status" value="2"/>
</dbReference>
<dbReference type="InterPro" id="IPR024934">
    <property type="entry name" value="Rubredoxin-like_dom"/>
</dbReference>
<dbReference type="InterPro" id="IPR024935">
    <property type="entry name" value="Rubredoxin_dom"/>
</dbReference>
<dbReference type="InterPro" id="IPR050526">
    <property type="entry name" value="Rubredoxin_ET"/>
</dbReference>
<dbReference type="InterPro" id="IPR018527">
    <property type="entry name" value="Rubredoxin_Fe_BS"/>
</dbReference>
<dbReference type="PANTHER" id="PTHR47627">
    <property type="entry name" value="RUBREDOXIN"/>
    <property type="match status" value="1"/>
</dbReference>
<dbReference type="PANTHER" id="PTHR47627:SF1">
    <property type="entry name" value="RUBREDOXIN-1-RELATED"/>
    <property type="match status" value="1"/>
</dbReference>
<dbReference type="Pfam" id="PF00301">
    <property type="entry name" value="Rubredoxin"/>
    <property type="match status" value="2"/>
</dbReference>
<dbReference type="PRINTS" id="PR00163">
    <property type="entry name" value="RUBREDOXIN"/>
</dbReference>
<dbReference type="SUPFAM" id="SSF57802">
    <property type="entry name" value="Rubredoxin-like"/>
    <property type="match status" value="2"/>
</dbReference>
<dbReference type="PROSITE" id="PS00202">
    <property type="entry name" value="RUBREDOXIN"/>
    <property type="match status" value="2"/>
</dbReference>
<dbReference type="PROSITE" id="PS50903">
    <property type="entry name" value="RUBREDOXIN_LIKE"/>
    <property type="match status" value="2"/>
</dbReference>
<feature type="initiator methionine" description="Removed" evidence="8">
    <location>
        <position position="1"/>
    </location>
</feature>
<feature type="chain" id="PRO_0000135044" description="Rubredoxin-2">
    <location>
        <begin position="2"/>
        <end position="173"/>
    </location>
</feature>
<feature type="domain" description="Rubredoxin-like 1" evidence="2">
    <location>
        <begin position="2"/>
        <end position="53"/>
    </location>
</feature>
<feature type="domain" description="Rubredoxin-like 2" evidence="2">
    <location>
        <begin position="119"/>
        <end position="170"/>
    </location>
</feature>
<feature type="binding site" evidence="2 6">
    <location>
        <position position="6"/>
    </location>
    <ligand>
        <name>Fe cation</name>
        <dbReference type="ChEBI" id="CHEBI:24875"/>
        <label>1</label>
    </ligand>
</feature>
<feature type="binding site" evidence="2 6">
    <location>
        <position position="9"/>
    </location>
    <ligand>
        <name>Fe cation</name>
        <dbReference type="ChEBI" id="CHEBI:24875"/>
        <label>1</label>
    </ligand>
</feature>
<feature type="binding site" evidence="2 6">
    <location>
        <position position="39"/>
    </location>
    <ligand>
        <name>Fe cation</name>
        <dbReference type="ChEBI" id="CHEBI:24875"/>
        <label>1</label>
    </ligand>
</feature>
<feature type="binding site" evidence="2 6">
    <location>
        <position position="42"/>
    </location>
    <ligand>
        <name>Fe cation</name>
        <dbReference type="ChEBI" id="CHEBI:24875"/>
        <label>1</label>
    </ligand>
</feature>
<feature type="binding site" evidence="2 6">
    <location>
        <position position="124"/>
    </location>
    <ligand>
        <name>Fe cation</name>
        <dbReference type="ChEBI" id="CHEBI:24875"/>
        <label>2</label>
    </ligand>
</feature>
<feature type="binding site" evidence="2 6">
    <location>
        <position position="127"/>
    </location>
    <ligand>
        <name>Fe cation</name>
        <dbReference type="ChEBI" id="CHEBI:24875"/>
        <label>2</label>
    </ligand>
</feature>
<feature type="binding site" evidence="2 6">
    <location>
        <position position="157"/>
    </location>
    <ligand>
        <name>Fe cation</name>
        <dbReference type="ChEBI" id="CHEBI:24875"/>
        <label>2</label>
    </ligand>
</feature>
<feature type="binding site" evidence="2 6">
    <location>
        <position position="160"/>
    </location>
    <ligand>
        <name>Fe cation</name>
        <dbReference type="ChEBI" id="CHEBI:24875"/>
        <label>2</label>
    </ligand>
</feature>
<feature type="sequence conflict" description="In Ref. 2; AA sequence." evidence="9" ref="2">
    <original>CCPD</original>
    <variation>DCPC</variation>
    <location>
        <begin position="38"/>
        <end position="41"/>
    </location>
</feature>
<feature type="sequence conflict" description="In Ref. 2; AA sequence." evidence="9" ref="2">
    <original>Q</original>
    <variation>E</variation>
    <location>
        <position position="107"/>
    </location>
</feature>
<feature type="sequence conflict" description="In Ref. 2; AA sequence." evidence="9" ref="2">
    <original>Q</original>
    <variation>E</variation>
    <location>
        <position position="114"/>
    </location>
</feature>
<feature type="sequence conflict" description="In Ref. 2; AA sequence." evidence="9" ref="2">
    <original>E</original>
    <variation>EW</variation>
    <location>
        <position position="133"/>
    </location>
</feature>
<feature type="sequence conflict" description="In Ref. 2; AA sequence." evidence="9" ref="2">
    <original>DW</original>
    <variation>WD</variation>
    <location>
        <begin position="154"/>
        <end position="155"/>
    </location>
</feature>
<feature type="sequence conflict" description="In Ref. 2; AA sequence." evidence="9" ref="2">
    <original>PDC</original>
    <variation>WCBP</variation>
    <location>
        <begin position="158"/>
        <end position="160"/>
    </location>
</feature>
<feature type="sequence conflict" description="In Ref. 2; AA sequence." evidence="9" ref="2">
    <original>D</original>
    <variation>N</variation>
    <location>
        <position position="166"/>
    </location>
</feature>
<feature type="strand" evidence="10">
    <location>
        <begin position="121"/>
        <end position="124"/>
    </location>
</feature>
<feature type="turn" evidence="10">
    <location>
        <begin position="125"/>
        <end position="127"/>
    </location>
</feature>
<feature type="strand" evidence="10">
    <location>
        <begin position="130"/>
        <end position="132"/>
    </location>
</feature>
<feature type="turn" evidence="10">
    <location>
        <begin position="138"/>
        <end position="141"/>
    </location>
</feature>
<feature type="helix" evidence="10">
    <location>
        <begin position="148"/>
        <end position="150"/>
    </location>
</feature>
<feature type="strand" evidence="10">
    <location>
        <begin position="158"/>
        <end position="160"/>
    </location>
</feature>
<feature type="helix" evidence="10">
    <location>
        <begin position="164"/>
        <end position="166"/>
    </location>
</feature>
<feature type="strand" evidence="10">
    <location>
        <begin position="167"/>
        <end position="169"/>
    </location>
</feature>
<accession>P00272</accession>
<sequence>MASYKCPDCNYVYDESAGNVHEGFSPGTPWHLIPEDWCCPDCAVRDKLDFMLIESGVGEKGVTSTHTSPNLSEVSGTSLTAEAVVAPTSLEKLPSADVKGQDLYKTQPPRSDAQGGKAYLKWICITCGHIYDEALGDEAEGFTPGTRFEDIPDDWCCPDCGATKEDYVLYEEK</sequence>